<evidence type="ECO:0000255" key="1">
    <source>
        <dbReference type="HAMAP-Rule" id="MF_00394"/>
    </source>
</evidence>
<protein>
    <recommendedName>
        <fullName evidence="1">Glycerol-3-phosphate dehydrogenase [NAD(P)+]</fullName>
        <ecNumber evidence="1">1.1.1.94</ecNumber>
    </recommendedName>
    <alternativeName>
        <fullName evidence="1">NAD(P)(+)-dependent glycerol-3-phosphate dehydrogenase</fullName>
    </alternativeName>
    <alternativeName>
        <fullName evidence="1">NAD(P)H-dependent dihydroxyacetone-phosphate reductase</fullName>
    </alternativeName>
</protein>
<organism>
    <name type="scientific">Nitrosomonas eutropha (strain DSM 101675 / C91 / Nm57)</name>
    <dbReference type="NCBI Taxonomy" id="335283"/>
    <lineage>
        <taxon>Bacteria</taxon>
        <taxon>Pseudomonadati</taxon>
        <taxon>Pseudomonadota</taxon>
        <taxon>Betaproteobacteria</taxon>
        <taxon>Nitrosomonadales</taxon>
        <taxon>Nitrosomonadaceae</taxon>
        <taxon>Nitrosomonas</taxon>
    </lineage>
</organism>
<accession>Q0AIA0</accession>
<keyword id="KW-0963">Cytoplasm</keyword>
<keyword id="KW-0444">Lipid biosynthesis</keyword>
<keyword id="KW-0443">Lipid metabolism</keyword>
<keyword id="KW-0520">NAD</keyword>
<keyword id="KW-0521">NADP</keyword>
<keyword id="KW-0547">Nucleotide-binding</keyword>
<keyword id="KW-0560">Oxidoreductase</keyword>
<keyword id="KW-0594">Phospholipid biosynthesis</keyword>
<keyword id="KW-1208">Phospholipid metabolism</keyword>
<name>GPDA_NITEC</name>
<reference key="1">
    <citation type="journal article" date="2007" name="Environ. Microbiol.">
        <title>Whole-genome analysis of the ammonia-oxidizing bacterium, Nitrosomonas eutropha C91: implications for niche adaptation.</title>
        <authorList>
            <person name="Stein L.Y."/>
            <person name="Arp D.J."/>
            <person name="Berube P.M."/>
            <person name="Chain P.S."/>
            <person name="Hauser L."/>
            <person name="Jetten M.S."/>
            <person name="Klotz M.G."/>
            <person name="Larimer F.W."/>
            <person name="Norton J.M."/>
            <person name="Op den Camp H.J.M."/>
            <person name="Shin M."/>
            <person name="Wei X."/>
        </authorList>
    </citation>
    <scope>NUCLEOTIDE SEQUENCE [LARGE SCALE GENOMIC DNA]</scope>
    <source>
        <strain>DSM 101675 / C91 / Nm57</strain>
    </source>
</reference>
<sequence length="329" mass="34732">MNITVLGAGAWGTALAIYLSARHHVTLWTRNTGHLAELAALRVNQRYLPGQHLPDSIHLASALSDALEQAELVLVVVPVAGLRVTLQRIAALNQSLPLVLGCKGFEAGTAKLPCQVVEDVYSAEITCGVLSGPSFAQEVAMGLPAALTLASDDDAFARRIASEIHTSILRVYSSSDVVGVEVGGALKNVIAIAAGISDGLAFGNNARAALITRGLAEITRLGVALGGHRKTFTGLSGIGDLILTCTGDLSRNRQVGMMLAAGCQLPEILLEIGHVTEGVYTVREAHEMGRQLQIDMPVTQAVYSILYEQIPVESAIRNMLDREPGAETD</sequence>
<feature type="chain" id="PRO_1000049529" description="Glycerol-3-phosphate dehydrogenase [NAD(P)+]">
    <location>
        <begin position="1"/>
        <end position="329"/>
    </location>
</feature>
<feature type="active site" description="Proton acceptor" evidence="1">
    <location>
        <position position="187"/>
    </location>
</feature>
<feature type="binding site" evidence="1">
    <location>
        <position position="11"/>
    </location>
    <ligand>
        <name>NADPH</name>
        <dbReference type="ChEBI" id="CHEBI:57783"/>
    </ligand>
</feature>
<feature type="binding site" evidence="1">
    <location>
        <position position="30"/>
    </location>
    <ligand>
        <name>NADPH</name>
        <dbReference type="ChEBI" id="CHEBI:57783"/>
    </ligand>
</feature>
<feature type="binding site" evidence="1">
    <location>
        <position position="103"/>
    </location>
    <ligand>
        <name>NADPH</name>
        <dbReference type="ChEBI" id="CHEBI:57783"/>
    </ligand>
</feature>
<feature type="binding site" evidence="1">
    <location>
        <position position="103"/>
    </location>
    <ligand>
        <name>sn-glycerol 3-phosphate</name>
        <dbReference type="ChEBI" id="CHEBI:57597"/>
    </ligand>
</feature>
<feature type="binding site" evidence="1">
    <location>
        <position position="132"/>
    </location>
    <ligand>
        <name>sn-glycerol 3-phosphate</name>
        <dbReference type="ChEBI" id="CHEBI:57597"/>
    </ligand>
</feature>
<feature type="binding site" evidence="1">
    <location>
        <position position="134"/>
    </location>
    <ligand>
        <name>sn-glycerol 3-phosphate</name>
        <dbReference type="ChEBI" id="CHEBI:57597"/>
    </ligand>
</feature>
<feature type="binding site" evidence="1">
    <location>
        <position position="136"/>
    </location>
    <ligand>
        <name>NADPH</name>
        <dbReference type="ChEBI" id="CHEBI:57783"/>
    </ligand>
</feature>
<feature type="binding site" evidence="1">
    <location>
        <position position="187"/>
    </location>
    <ligand>
        <name>sn-glycerol 3-phosphate</name>
        <dbReference type="ChEBI" id="CHEBI:57597"/>
    </ligand>
</feature>
<feature type="binding site" evidence="1">
    <location>
        <position position="240"/>
    </location>
    <ligand>
        <name>sn-glycerol 3-phosphate</name>
        <dbReference type="ChEBI" id="CHEBI:57597"/>
    </ligand>
</feature>
<feature type="binding site" evidence="1">
    <location>
        <position position="250"/>
    </location>
    <ligand>
        <name>sn-glycerol 3-phosphate</name>
        <dbReference type="ChEBI" id="CHEBI:57597"/>
    </ligand>
</feature>
<feature type="binding site" evidence="1">
    <location>
        <position position="251"/>
    </location>
    <ligand>
        <name>NADPH</name>
        <dbReference type="ChEBI" id="CHEBI:57783"/>
    </ligand>
</feature>
<feature type="binding site" evidence="1">
    <location>
        <position position="251"/>
    </location>
    <ligand>
        <name>sn-glycerol 3-phosphate</name>
        <dbReference type="ChEBI" id="CHEBI:57597"/>
    </ligand>
</feature>
<feature type="binding site" evidence="1">
    <location>
        <position position="252"/>
    </location>
    <ligand>
        <name>sn-glycerol 3-phosphate</name>
        <dbReference type="ChEBI" id="CHEBI:57597"/>
    </ligand>
</feature>
<feature type="binding site" evidence="1">
    <location>
        <position position="275"/>
    </location>
    <ligand>
        <name>NADPH</name>
        <dbReference type="ChEBI" id="CHEBI:57783"/>
    </ligand>
</feature>
<feature type="binding site" evidence="1">
    <location>
        <position position="277"/>
    </location>
    <ligand>
        <name>NADPH</name>
        <dbReference type="ChEBI" id="CHEBI:57783"/>
    </ligand>
</feature>
<comment type="function">
    <text evidence="1">Catalyzes the reduction of the glycolytic intermediate dihydroxyacetone phosphate (DHAP) to sn-glycerol 3-phosphate (G3P), the key precursor for phospholipid synthesis.</text>
</comment>
<comment type="catalytic activity">
    <reaction evidence="1">
        <text>sn-glycerol 3-phosphate + NAD(+) = dihydroxyacetone phosphate + NADH + H(+)</text>
        <dbReference type="Rhea" id="RHEA:11092"/>
        <dbReference type="ChEBI" id="CHEBI:15378"/>
        <dbReference type="ChEBI" id="CHEBI:57540"/>
        <dbReference type="ChEBI" id="CHEBI:57597"/>
        <dbReference type="ChEBI" id="CHEBI:57642"/>
        <dbReference type="ChEBI" id="CHEBI:57945"/>
        <dbReference type="EC" id="1.1.1.94"/>
    </reaction>
    <physiologicalReaction direction="right-to-left" evidence="1">
        <dbReference type="Rhea" id="RHEA:11094"/>
    </physiologicalReaction>
</comment>
<comment type="catalytic activity">
    <reaction evidence="1">
        <text>sn-glycerol 3-phosphate + NADP(+) = dihydroxyacetone phosphate + NADPH + H(+)</text>
        <dbReference type="Rhea" id="RHEA:11096"/>
        <dbReference type="ChEBI" id="CHEBI:15378"/>
        <dbReference type="ChEBI" id="CHEBI:57597"/>
        <dbReference type="ChEBI" id="CHEBI:57642"/>
        <dbReference type="ChEBI" id="CHEBI:57783"/>
        <dbReference type="ChEBI" id="CHEBI:58349"/>
        <dbReference type="EC" id="1.1.1.94"/>
    </reaction>
    <physiologicalReaction direction="right-to-left" evidence="1">
        <dbReference type="Rhea" id="RHEA:11098"/>
    </physiologicalReaction>
</comment>
<comment type="pathway">
    <text evidence="1">Membrane lipid metabolism; glycerophospholipid metabolism.</text>
</comment>
<comment type="subcellular location">
    <subcellularLocation>
        <location evidence="1">Cytoplasm</location>
    </subcellularLocation>
</comment>
<comment type="similarity">
    <text evidence="1">Belongs to the NAD-dependent glycerol-3-phosphate dehydrogenase family.</text>
</comment>
<proteinExistence type="inferred from homology"/>
<dbReference type="EC" id="1.1.1.94" evidence="1"/>
<dbReference type="EMBL" id="CP000450">
    <property type="protein sequence ID" value="ABI58932.1"/>
    <property type="molecule type" value="Genomic_DNA"/>
</dbReference>
<dbReference type="RefSeq" id="WP_011633773.1">
    <property type="nucleotide sequence ID" value="NC_008344.1"/>
</dbReference>
<dbReference type="SMR" id="Q0AIA0"/>
<dbReference type="STRING" id="335283.Neut_0660"/>
<dbReference type="KEGG" id="net:Neut_0660"/>
<dbReference type="eggNOG" id="COG0240">
    <property type="taxonomic scope" value="Bacteria"/>
</dbReference>
<dbReference type="HOGENOM" id="CLU_033449_0_2_4"/>
<dbReference type="OrthoDB" id="9812273at2"/>
<dbReference type="UniPathway" id="UPA00940"/>
<dbReference type="Proteomes" id="UP000001966">
    <property type="component" value="Chromosome"/>
</dbReference>
<dbReference type="GO" id="GO:0005829">
    <property type="term" value="C:cytosol"/>
    <property type="evidence" value="ECO:0007669"/>
    <property type="project" value="TreeGrafter"/>
</dbReference>
<dbReference type="GO" id="GO:0047952">
    <property type="term" value="F:glycerol-3-phosphate dehydrogenase [NAD(P)+] activity"/>
    <property type="evidence" value="ECO:0007669"/>
    <property type="project" value="UniProtKB-UniRule"/>
</dbReference>
<dbReference type="GO" id="GO:0051287">
    <property type="term" value="F:NAD binding"/>
    <property type="evidence" value="ECO:0007669"/>
    <property type="project" value="InterPro"/>
</dbReference>
<dbReference type="GO" id="GO:0005975">
    <property type="term" value="P:carbohydrate metabolic process"/>
    <property type="evidence" value="ECO:0007669"/>
    <property type="project" value="InterPro"/>
</dbReference>
<dbReference type="GO" id="GO:0046167">
    <property type="term" value="P:glycerol-3-phosphate biosynthetic process"/>
    <property type="evidence" value="ECO:0007669"/>
    <property type="project" value="UniProtKB-UniRule"/>
</dbReference>
<dbReference type="GO" id="GO:0046168">
    <property type="term" value="P:glycerol-3-phosphate catabolic process"/>
    <property type="evidence" value="ECO:0007669"/>
    <property type="project" value="InterPro"/>
</dbReference>
<dbReference type="GO" id="GO:0006650">
    <property type="term" value="P:glycerophospholipid metabolic process"/>
    <property type="evidence" value="ECO:0007669"/>
    <property type="project" value="UniProtKB-UniRule"/>
</dbReference>
<dbReference type="GO" id="GO:0008654">
    <property type="term" value="P:phospholipid biosynthetic process"/>
    <property type="evidence" value="ECO:0007669"/>
    <property type="project" value="UniProtKB-KW"/>
</dbReference>
<dbReference type="FunFam" id="1.10.1040.10:FF:000001">
    <property type="entry name" value="Glycerol-3-phosphate dehydrogenase [NAD(P)+]"/>
    <property type="match status" value="1"/>
</dbReference>
<dbReference type="FunFam" id="3.40.50.720:FF:000019">
    <property type="entry name" value="Glycerol-3-phosphate dehydrogenase [NAD(P)+]"/>
    <property type="match status" value="1"/>
</dbReference>
<dbReference type="Gene3D" id="1.10.1040.10">
    <property type="entry name" value="N-(1-d-carboxylethyl)-l-norvaline Dehydrogenase, domain 2"/>
    <property type="match status" value="1"/>
</dbReference>
<dbReference type="Gene3D" id="3.40.50.720">
    <property type="entry name" value="NAD(P)-binding Rossmann-like Domain"/>
    <property type="match status" value="1"/>
</dbReference>
<dbReference type="HAMAP" id="MF_00394">
    <property type="entry name" value="NAD_Glyc3P_dehydrog"/>
    <property type="match status" value="1"/>
</dbReference>
<dbReference type="InterPro" id="IPR008927">
    <property type="entry name" value="6-PGluconate_DH-like_C_sf"/>
</dbReference>
<dbReference type="InterPro" id="IPR013328">
    <property type="entry name" value="6PGD_dom2"/>
</dbReference>
<dbReference type="InterPro" id="IPR006168">
    <property type="entry name" value="G3P_DH_NAD-dep"/>
</dbReference>
<dbReference type="InterPro" id="IPR006109">
    <property type="entry name" value="G3P_DH_NAD-dep_C"/>
</dbReference>
<dbReference type="InterPro" id="IPR011128">
    <property type="entry name" value="G3P_DH_NAD-dep_N"/>
</dbReference>
<dbReference type="InterPro" id="IPR036291">
    <property type="entry name" value="NAD(P)-bd_dom_sf"/>
</dbReference>
<dbReference type="NCBIfam" id="NF000940">
    <property type="entry name" value="PRK00094.1-2"/>
    <property type="match status" value="1"/>
</dbReference>
<dbReference type="NCBIfam" id="NF000942">
    <property type="entry name" value="PRK00094.1-4"/>
    <property type="match status" value="1"/>
</dbReference>
<dbReference type="PANTHER" id="PTHR11728">
    <property type="entry name" value="GLYCEROL-3-PHOSPHATE DEHYDROGENASE"/>
    <property type="match status" value="1"/>
</dbReference>
<dbReference type="PANTHER" id="PTHR11728:SF1">
    <property type="entry name" value="GLYCEROL-3-PHOSPHATE DEHYDROGENASE [NAD(+)] 2, CHLOROPLASTIC"/>
    <property type="match status" value="1"/>
</dbReference>
<dbReference type="Pfam" id="PF07479">
    <property type="entry name" value="NAD_Gly3P_dh_C"/>
    <property type="match status" value="1"/>
</dbReference>
<dbReference type="Pfam" id="PF01210">
    <property type="entry name" value="NAD_Gly3P_dh_N"/>
    <property type="match status" value="1"/>
</dbReference>
<dbReference type="PIRSF" id="PIRSF000114">
    <property type="entry name" value="Glycerol-3-P_dh"/>
    <property type="match status" value="1"/>
</dbReference>
<dbReference type="PRINTS" id="PR00077">
    <property type="entry name" value="GPDHDRGNASE"/>
</dbReference>
<dbReference type="SUPFAM" id="SSF48179">
    <property type="entry name" value="6-phosphogluconate dehydrogenase C-terminal domain-like"/>
    <property type="match status" value="1"/>
</dbReference>
<dbReference type="SUPFAM" id="SSF51735">
    <property type="entry name" value="NAD(P)-binding Rossmann-fold domains"/>
    <property type="match status" value="1"/>
</dbReference>
<dbReference type="PROSITE" id="PS00957">
    <property type="entry name" value="NAD_G3PDH"/>
    <property type="match status" value="1"/>
</dbReference>
<gene>
    <name evidence="1" type="primary">gpsA</name>
    <name type="ordered locus">Neut_0660</name>
</gene>